<dbReference type="EMBL" id="AF016627">
    <property type="protein sequence ID" value="AAB95202.1"/>
    <property type="molecule type" value="mRNA"/>
</dbReference>
<dbReference type="EMBL" id="AF016628">
    <property type="protein sequence ID" value="AAB95203.1"/>
    <property type="molecule type" value="mRNA"/>
</dbReference>
<dbReference type="EMBL" id="AF016629">
    <property type="protein sequence ID" value="AAB95204.1"/>
    <property type="molecule type" value="mRNA"/>
</dbReference>
<dbReference type="EMBL" id="AF016630">
    <property type="protein sequence ID" value="AAB95205.1"/>
    <property type="molecule type" value="mRNA"/>
</dbReference>
<dbReference type="EMBL" id="AF016631">
    <property type="protein sequence ID" value="AAB95206.1"/>
    <property type="molecule type" value="mRNA"/>
</dbReference>
<dbReference type="EMBL" id="AF004434">
    <property type="protein sequence ID" value="AAB88121.1"/>
    <property type="molecule type" value="Genomic_DNA"/>
</dbReference>
<dbReference type="EMBL" id="AF004435">
    <property type="protein sequence ID" value="AAB88122.1"/>
    <property type="molecule type" value="mRNA"/>
</dbReference>
<dbReference type="EMBL" id="Y13438">
    <property type="protein sequence ID" value="CAA73849.1"/>
    <property type="molecule type" value="Genomic_DNA"/>
</dbReference>
<dbReference type="EMBL" id="AJ243657">
    <property type="protein sequence ID" value="CAB52696.1"/>
    <property type="molecule type" value="mRNA"/>
</dbReference>
<dbReference type="EMBL" id="AJ243658">
    <property type="protein sequence ID" value="CAB52697.1"/>
    <property type="molecule type" value="mRNA"/>
</dbReference>
<dbReference type="EMBL" id="BC144791">
    <property type="protein sequence ID" value="AAI44792.1"/>
    <property type="molecule type" value="mRNA"/>
</dbReference>
<dbReference type="CCDS" id="CCDS30299.1">
    <molecule id="O54693-1"/>
</dbReference>
<dbReference type="CCDS" id="CCDS53141.1">
    <molecule id="O54693-6"/>
</dbReference>
<dbReference type="CCDS" id="CCDS53143.1">
    <molecule id="O54693-3"/>
</dbReference>
<dbReference type="RefSeq" id="NP_001171408.1">
    <molecule id="O54693-2"/>
    <property type="nucleotide sequence ID" value="NM_001177937.1"/>
</dbReference>
<dbReference type="RefSeq" id="NP_001171410.1">
    <molecule id="O54693-3"/>
    <property type="nucleotide sequence ID" value="NM_001177939.1"/>
</dbReference>
<dbReference type="RefSeq" id="NP_001171413.1">
    <molecule id="O54693-6"/>
    <property type="nucleotide sequence ID" value="NM_001177942.1"/>
</dbReference>
<dbReference type="RefSeq" id="NP_034229.1">
    <molecule id="O54693-1"/>
    <property type="nucleotide sequence ID" value="NM_010099.2"/>
</dbReference>
<dbReference type="SMR" id="O54693"/>
<dbReference type="BioGRID" id="199371">
    <property type="interactions" value="2"/>
</dbReference>
<dbReference type="FunCoup" id="O54693">
    <property type="interactions" value="615"/>
</dbReference>
<dbReference type="STRING" id="10090.ENSMUSP00000109409"/>
<dbReference type="GlyCosmos" id="O54693">
    <property type="glycosylation" value="2 sites, No reported glycans"/>
</dbReference>
<dbReference type="GlyGen" id="O54693">
    <property type="glycosylation" value="2 sites"/>
</dbReference>
<dbReference type="PhosphoSitePlus" id="O54693"/>
<dbReference type="PaxDb" id="10090-ENSMUSP00000109409"/>
<dbReference type="ProteomicsDB" id="277670">
    <molecule id="O54693-1"/>
</dbReference>
<dbReference type="ProteomicsDB" id="277671">
    <molecule id="O54693-2"/>
</dbReference>
<dbReference type="ProteomicsDB" id="277672">
    <molecule id="O54693-3"/>
</dbReference>
<dbReference type="ProteomicsDB" id="277675">
    <molecule id="O54693-6"/>
</dbReference>
<dbReference type="ABCD" id="O54693">
    <property type="antibodies" value="3 sequenced antibodies"/>
</dbReference>
<dbReference type="Antibodypedia" id="27342">
    <property type="antibodies" value="565 antibodies from 37 providers"/>
</dbReference>
<dbReference type="DNASU" id="13607"/>
<dbReference type="Ensembl" id="ENSMUST00000113778.8">
    <molecule id="O54693-3"/>
    <property type="protein sequence ID" value="ENSMUSP00000109408.2"/>
    <property type="gene ID" value="ENSMUSG00000059327.10"/>
</dbReference>
<dbReference type="Ensembl" id="ENSMUST00000113779.8">
    <molecule id="O54693-1"/>
    <property type="protein sequence ID" value="ENSMUSP00000109409.2"/>
    <property type="gene ID" value="ENSMUSG00000059327.10"/>
</dbReference>
<dbReference type="Ensembl" id="ENSMUST00000113780.8">
    <molecule id="O54693-6"/>
    <property type="protein sequence ID" value="ENSMUSP00000109410.2"/>
    <property type="gene ID" value="ENSMUSG00000059327.10"/>
</dbReference>
<dbReference type="GeneID" id="13607"/>
<dbReference type="KEGG" id="mmu:13607"/>
<dbReference type="UCSC" id="uc009tvo.1">
    <molecule id="O54693-5"/>
    <property type="organism name" value="mouse"/>
</dbReference>
<dbReference type="UCSC" id="uc009tvp.1">
    <molecule id="O54693-4"/>
    <property type="organism name" value="mouse"/>
</dbReference>
<dbReference type="UCSC" id="uc009tvq.1">
    <molecule id="O54693-1"/>
    <property type="organism name" value="mouse"/>
</dbReference>
<dbReference type="UCSC" id="uc009tvs.1">
    <molecule id="O54693-3"/>
    <property type="organism name" value="mouse"/>
</dbReference>
<dbReference type="UCSC" id="uc009tvu.1">
    <molecule id="O54693-2"/>
    <property type="organism name" value="mouse"/>
</dbReference>
<dbReference type="UCSC" id="uc012hmq.1">
    <molecule id="O54693-6"/>
    <property type="organism name" value="mouse"/>
</dbReference>
<dbReference type="AGR" id="MGI:1195272"/>
<dbReference type="CTD" id="1896"/>
<dbReference type="MGI" id="MGI:1195272">
    <property type="gene designation" value="Eda"/>
</dbReference>
<dbReference type="VEuPathDB" id="HostDB:ENSMUSG00000059327"/>
<dbReference type="eggNOG" id="ENOG502QUAV">
    <property type="taxonomic scope" value="Eukaryota"/>
</dbReference>
<dbReference type="GeneTree" id="ENSGT00730000111220"/>
<dbReference type="HOGENOM" id="CLU_062448_0_0_1"/>
<dbReference type="InParanoid" id="O54693"/>
<dbReference type="OMA" id="PRGAPCM"/>
<dbReference type="OrthoDB" id="6159739at2759"/>
<dbReference type="PhylomeDB" id="O54693"/>
<dbReference type="TreeFam" id="TF332099"/>
<dbReference type="Reactome" id="R-MMU-5669034">
    <property type="pathway name" value="TNFs bind their physiological receptors"/>
</dbReference>
<dbReference type="BioGRID-ORCS" id="13607">
    <property type="hits" value="0 hits in 77 CRISPR screens"/>
</dbReference>
<dbReference type="ChiTaRS" id="Eda">
    <property type="organism name" value="mouse"/>
</dbReference>
<dbReference type="PRO" id="PR:O54693"/>
<dbReference type="Proteomes" id="UP000000589">
    <property type="component" value="Chromosome X"/>
</dbReference>
<dbReference type="RNAct" id="O54693">
    <property type="molecule type" value="protein"/>
</dbReference>
<dbReference type="Bgee" id="ENSMUSG00000059327">
    <property type="expression patterns" value="Expressed in dental lamina and 149 other cell types or tissues"/>
</dbReference>
<dbReference type="ExpressionAtlas" id="O54693">
    <property type="expression patterns" value="baseline and differential"/>
</dbReference>
<dbReference type="GO" id="GO:0045177">
    <property type="term" value="C:apical part of cell"/>
    <property type="evidence" value="ECO:0000314"/>
    <property type="project" value="MGI"/>
</dbReference>
<dbReference type="GO" id="GO:0005581">
    <property type="term" value="C:collagen trimer"/>
    <property type="evidence" value="ECO:0007669"/>
    <property type="project" value="UniProtKB-KW"/>
</dbReference>
<dbReference type="GO" id="GO:0005789">
    <property type="term" value="C:endoplasmic reticulum membrane"/>
    <property type="evidence" value="ECO:0000314"/>
    <property type="project" value="MGI"/>
</dbReference>
<dbReference type="GO" id="GO:0005615">
    <property type="term" value="C:extracellular space"/>
    <property type="evidence" value="ECO:0007669"/>
    <property type="project" value="UniProtKB-KW"/>
</dbReference>
<dbReference type="GO" id="GO:0005811">
    <property type="term" value="C:lipid droplet"/>
    <property type="evidence" value="ECO:0007669"/>
    <property type="project" value="Ensembl"/>
</dbReference>
<dbReference type="GO" id="GO:0005886">
    <property type="term" value="C:plasma membrane"/>
    <property type="evidence" value="ECO:0000314"/>
    <property type="project" value="MGI"/>
</dbReference>
<dbReference type="GO" id="GO:0005125">
    <property type="term" value="F:cytokine activity"/>
    <property type="evidence" value="ECO:0007669"/>
    <property type="project" value="UniProtKB-KW"/>
</dbReference>
<dbReference type="GO" id="GO:0038177">
    <property type="term" value="F:death receptor agonist activity"/>
    <property type="evidence" value="ECO:0000250"/>
    <property type="project" value="UniProtKB"/>
</dbReference>
<dbReference type="GO" id="GO:0005123">
    <property type="term" value="F:death receptor binding"/>
    <property type="evidence" value="ECO:0000250"/>
    <property type="project" value="UniProtKB"/>
</dbReference>
<dbReference type="GO" id="GO:0005164">
    <property type="term" value="F:tumor necrosis factor receptor binding"/>
    <property type="evidence" value="ECO:0007669"/>
    <property type="project" value="InterPro"/>
</dbReference>
<dbReference type="GO" id="GO:0060070">
    <property type="term" value="P:canonical Wnt signaling pathway"/>
    <property type="evidence" value="ECO:0000315"/>
    <property type="project" value="MGI"/>
</dbReference>
<dbReference type="GO" id="GO:0030154">
    <property type="term" value="P:cell differentiation"/>
    <property type="evidence" value="ECO:0007669"/>
    <property type="project" value="UniProtKB-KW"/>
</dbReference>
<dbReference type="GO" id="GO:0007160">
    <property type="term" value="P:cell-matrix adhesion"/>
    <property type="evidence" value="ECO:0000314"/>
    <property type="project" value="MGI"/>
</dbReference>
<dbReference type="GO" id="GO:0019221">
    <property type="term" value="P:cytokine-mediated signaling pathway"/>
    <property type="evidence" value="ECO:0000250"/>
    <property type="project" value="UniProtKB"/>
</dbReference>
<dbReference type="GO" id="GO:0010467">
    <property type="term" value="P:gene expression"/>
    <property type="evidence" value="ECO:0000315"/>
    <property type="project" value="MGI"/>
</dbReference>
<dbReference type="GO" id="GO:0001942">
    <property type="term" value="P:hair follicle development"/>
    <property type="evidence" value="ECO:0000315"/>
    <property type="project" value="MGI"/>
</dbReference>
<dbReference type="GO" id="GO:0060789">
    <property type="term" value="P:hair follicle placode formation"/>
    <property type="evidence" value="ECO:0000316"/>
    <property type="project" value="MGI"/>
</dbReference>
<dbReference type="GO" id="GO:0006955">
    <property type="term" value="P:immune response"/>
    <property type="evidence" value="ECO:0007669"/>
    <property type="project" value="InterPro"/>
</dbReference>
<dbReference type="GO" id="GO:0042475">
    <property type="term" value="P:odontogenesis of dentin-containing tooth"/>
    <property type="evidence" value="ECO:0000315"/>
    <property type="project" value="MGI"/>
</dbReference>
<dbReference type="GO" id="GO:0043473">
    <property type="term" value="P:pigmentation"/>
    <property type="evidence" value="ECO:0000315"/>
    <property type="project" value="MGI"/>
</dbReference>
<dbReference type="GO" id="GO:0043123">
    <property type="term" value="P:positive regulation of canonical NF-kappaB signal transduction"/>
    <property type="evidence" value="ECO:0000315"/>
    <property type="project" value="MGI"/>
</dbReference>
<dbReference type="GO" id="GO:0090263">
    <property type="term" value="P:positive regulation of canonical Wnt signaling pathway"/>
    <property type="evidence" value="ECO:0000315"/>
    <property type="project" value="MGI"/>
</dbReference>
<dbReference type="GO" id="GO:0010628">
    <property type="term" value="P:positive regulation of gene expression"/>
    <property type="evidence" value="ECO:0000314"/>
    <property type="project" value="MGI"/>
</dbReference>
<dbReference type="GO" id="GO:1901224">
    <property type="term" value="P:positive regulation of non-canonical NF-kappaB signal transduction"/>
    <property type="evidence" value="ECO:0000314"/>
    <property type="project" value="MGI"/>
</dbReference>
<dbReference type="GO" id="GO:1901222">
    <property type="term" value="P:regulation of non-canonical NF-kappaB signal transduction"/>
    <property type="evidence" value="ECO:0000250"/>
    <property type="project" value="UniProtKB"/>
</dbReference>
<dbReference type="GO" id="GO:0060662">
    <property type="term" value="P:salivary gland cavitation"/>
    <property type="evidence" value="ECO:0000314"/>
    <property type="project" value="MGI"/>
</dbReference>
<dbReference type="GO" id="GO:0043588">
    <property type="term" value="P:skin development"/>
    <property type="evidence" value="ECO:0000315"/>
    <property type="project" value="MGI"/>
</dbReference>
<dbReference type="GO" id="GO:0061153">
    <property type="term" value="P:trachea gland development"/>
    <property type="evidence" value="ECO:0000315"/>
    <property type="project" value="MGI"/>
</dbReference>
<dbReference type="CDD" id="cd00184">
    <property type="entry name" value="TNF"/>
    <property type="match status" value="1"/>
</dbReference>
<dbReference type="FunFam" id="2.60.120.40:FF:000004">
    <property type="entry name" value="Ectodysplasin-A isoform A"/>
    <property type="match status" value="1"/>
</dbReference>
<dbReference type="Gene3D" id="2.60.120.40">
    <property type="match status" value="1"/>
</dbReference>
<dbReference type="InterPro" id="IPR006052">
    <property type="entry name" value="TNF_dom"/>
</dbReference>
<dbReference type="InterPro" id="IPR051748">
    <property type="entry name" value="TNF_Ligand_Superfamily"/>
</dbReference>
<dbReference type="InterPro" id="IPR008983">
    <property type="entry name" value="Tumour_necrosis_fac-like_dom"/>
</dbReference>
<dbReference type="PANTHER" id="PTHR15151:SF13">
    <property type="entry name" value="ECTODYSPLASIN-A"/>
    <property type="match status" value="1"/>
</dbReference>
<dbReference type="PANTHER" id="PTHR15151">
    <property type="entry name" value="PROTEIN EIGER"/>
    <property type="match status" value="1"/>
</dbReference>
<dbReference type="Pfam" id="PF00229">
    <property type="entry name" value="TNF"/>
    <property type="match status" value="1"/>
</dbReference>
<dbReference type="SUPFAM" id="SSF49842">
    <property type="entry name" value="TNF-like"/>
    <property type="match status" value="1"/>
</dbReference>
<dbReference type="PROSITE" id="PS50049">
    <property type="entry name" value="THD_2"/>
    <property type="match status" value="1"/>
</dbReference>
<feature type="chain" id="PRO_0000034540" description="Ectodysplasin-A, membrane form">
    <location>
        <begin position="1"/>
        <end position="391"/>
    </location>
</feature>
<feature type="chain" id="PRO_0000034541" description="Ectodysplasin-A, secreted form" evidence="1">
    <location>
        <begin position="160"/>
        <end position="391"/>
    </location>
</feature>
<feature type="topological domain" description="Cytoplasmic" evidence="2">
    <location>
        <begin position="1"/>
        <end position="41"/>
    </location>
</feature>
<feature type="transmembrane region" description="Helical; Signal-anchor for type II membrane protein" evidence="2">
    <location>
        <begin position="42"/>
        <end position="62"/>
    </location>
</feature>
<feature type="topological domain" description="Extracellular" evidence="2">
    <location>
        <begin position="63"/>
        <end position="391"/>
    </location>
</feature>
<feature type="domain" description="Collagen-like">
    <location>
        <begin position="180"/>
        <end position="229"/>
    </location>
</feature>
<feature type="domain" description="THD" evidence="3">
    <location>
        <begin position="249"/>
        <end position="385"/>
    </location>
</feature>
<feature type="region of interest" description="Disordered" evidence="4">
    <location>
        <begin position="1"/>
        <end position="28"/>
    </location>
</feature>
<feature type="region of interest" description="Disordered" evidence="4">
    <location>
        <begin position="72"/>
        <end position="129"/>
    </location>
</feature>
<feature type="region of interest" description="Disordered" evidence="4">
    <location>
        <begin position="146"/>
        <end position="244"/>
    </location>
</feature>
<feature type="compositionally biased region" description="Basic and acidic residues" evidence="4">
    <location>
        <begin position="1"/>
        <end position="21"/>
    </location>
</feature>
<feature type="compositionally biased region" description="Low complexity" evidence="4">
    <location>
        <begin position="86"/>
        <end position="96"/>
    </location>
</feature>
<feature type="compositionally biased region" description="Pro residues" evidence="4">
    <location>
        <begin position="181"/>
        <end position="203"/>
    </location>
</feature>
<feature type="compositionally biased region" description="Pro residues" evidence="4">
    <location>
        <begin position="216"/>
        <end position="228"/>
    </location>
</feature>
<feature type="site" description="Cleavage; by furin" evidence="1">
    <location>
        <begin position="159"/>
        <end position="160"/>
    </location>
</feature>
<feature type="glycosylation site" description="N-linked (GlcNAc...) asparagine" evidence="2">
    <location>
        <position position="313"/>
    </location>
</feature>
<feature type="glycosylation site" description="N-linked (GlcNAc...) asparagine" evidence="2">
    <location>
        <position position="372"/>
    </location>
</feature>
<feature type="disulfide bond" evidence="3">
    <location>
        <begin position="332"/>
        <end position="346"/>
    </location>
</feature>
<feature type="splice variant" id="VSP_006465" description="In isoform TAC." evidence="9">
    <original>MALLNFFFPDEKAYSEEESRRVRRNKRSKSGEGADGPVKNKKKGKKAGPPGPNGPPGPPGPPGPQGPPGIPGIPGIPGTTVMGPPGPPGPPGPQGPPGLQGPSGAA</original>
    <variation>VSHLGGAAALEAPSPARLGGGLGLRAQGTLPLRAKFQGRSWEWAGVLGRGCPGQVVLGSCLGSSRPSPVPWSWKAQPARAAPGEVWAA</variation>
    <location>
        <begin position="133"/>
        <end position="238"/>
    </location>
</feature>
<feature type="splice variant" id="VSP_006466" description="In isoform TAB." evidence="9">
    <original>PVKNKKKGK</original>
    <variation>KSTQVIFFP</variation>
    <location>
        <begin position="169"/>
        <end position="177"/>
    </location>
</feature>
<feature type="splice variant" id="VSP_006467" description="In isoform TAB." evidence="9">
    <location>
        <begin position="178"/>
        <end position="391"/>
    </location>
</feature>
<feature type="splice variant" id="VSP_006468" description="In isoform TAC." evidence="9">
    <location>
        <begin position="239"/>
        <end position="391"/>
    </location>
</feature>
<feature type="splice variant" id="VSP_006469" description="In isoform TA-A3." evidence="6">
    <location>
        <begin position="265"/>
        <end position="267"/>
    </location>
</feature>
<feature type="splice variant" id="VSP_006470" description="In isoform TAD." evidence="8">
    <location>
        <begin position="295"/>
        <end position="308"/>
    </location>
</feature>
<feature type="splice variant" id="VSP_006471" description="In isoform TA-A2 and isoform TA-A3." evidence="6 7">
    <location>
        <begin position="307"/>
        <end position="308"/>
    </location>
</feature>
<feature type="sequence conflict" description="In Ref. 2; AAB88121/AAB88122." evidence="10" ref="2">
    <original>D</original>
    <variation>E</variation>
    <location>
        <position position="126"/>
    </location>
</feature>
<gene>
    <name type="primary">Eda</name>
    <name type="synonym">Ed1</name>
    <name type="synonym">Ta</name>
</gene>
<name>EDA_MOUSE</name>
<comment type="function">
    <text evidence="1 5">Cytokine which is involved in epithelial-mesenchymal signaling during morphogenesis of ectodermal organs. Functions as a ligand activating the DEATH-domain containing receptors EDAR and EDA2R. Isoform TAA binds only to the receptor EDAR, while isoform TA-A2 binds exclusively to the receptor EDA2R (By similarity). May also play a role in cell adhesion (PubMed:10534613).</text>
</comment>
<comment type="function">
    <text evidence="1">Isoform TAA binds only to the receptor EDAR, while isoform TA-A2 binds exclusively to the receptor EDA2R.</text>
</comment>
<comment type="function">
    <text evidence="1">Isoform TA-A2 binds exclusively to the receptor EDA2R.</text>
</comment>
<comment type="subunit">
    <text evidence="5">Homotrimer. The homotrimers may then dimerize and form higher-order oligomers.</text>
</comment>
<comment type="subcellular location">
    <subcellularLocation>
        <location evidence="5">Cell membrane</location>
        <topology evidence="5">Single-pass type II membrane protein</topology>
    </subcellularLocation>
</comment>
<comment type="subcellular location">
    <molecule>Ectodysplasin-A, secreted form</molecule>
    <subcellularLocation>
        <location evidence="1">Secreted</location>
    </subcellularLocation>
</comment>
<comment type="alternative products">
    <event type="alternative splicing"/>
    <isoform>
        <id>O54693-1</id>
        <name>TAA</name>
        <name>A1</name>
        <sequence type="displayed"/>
    </isoform>
    <isoform>
        <id>O54693-2</id>
        <name>TA-A2</name>
        <sequence type="described" ref="VSP_006471"/>
    </isoform>
    <isoform>
        <id>O54693-3</id>
        <name>TA-A3</name>
        <sequence type="described" ref="VSP_006469 VSP_006471"/>
    </isoform>
    <isoform>
        <id>O54693-4</id>
        <name>TAB</name>
        <sequence type="described" ref="VSP_006466 VSP_006467"/>
    </isoform>
    <isoform>
        <id>O54693-5</id>
        <name>TAC</name>
        <sequence type="described" ref="VSP_006465 VSP_006468"/>
    </isoform>
    <isoform>
        <id>O54693-6</id>
        <name>TAD</name>
        <sequence type="described" ref="VSP_006470"/>
    </isoform>
    <text>Additional isoforms seem to exist.</text>
</comment>
<comment type="PTM">
    <text evidence="5">N-glycosylated.</text>
</comment>
<comment type="PTM">
    <text evidence="1">Processing by furin produces a secreted form.</text>
</comment>
<comment type="disease">
    <text>Defects in Eda are the cause of the tabby phenotype in mice (the equivalent of anhidrotic ectodermal dysplasia in humans). The disease is characterized by sparse hair (atrichosis or hypotrichosis), abnormal or missing teeth and the inability to sweat due to the absence of sweat glands.</text>
</comment>
<comment type="similarity">
    <text evidence="10">Belongs to the tumor necrosis factor family.</text>
</comment>
<proteinExistence type="evidence at protein level"/>
<keyword id="KW-0025">Alternative splicing</keyword>
<keyword id="KW-1003">Cell membrane</keyword>
<keyword id="KW-0165">Cleavage on pair of basic residues</keyword>
<keyword id="KW-0176">Collagen</keyword>
<keyword id="KW-0202">Cytokine</keyword>
<keyword id="KW-0217">Developmental protein</keyword>
<keyword id="KW-0221">Differentiation</keyword>
<keyword id="KW-1015">Disulfide bond</keyword>
<keyword id="KW-0325">Glycoprotein</keyword>
<keyword id="KW-0472">Membrane</keyword>
<keyword id="KW-1185">Reference proteome</keyword>
<keyword id="KW-0964">Secreted</keyword>
<keyword id="KW-0735">Signal-anchor</keyword>
<keyword id="KW-0812">Transmembrane</keyword>
<keyword id="KW-1133">Transmembrane helix</keyword>
<reference key="1">
    <citation type="journal article" date="1997" name="Proc. Natl. Acad. Sci. U.S.A.">
        <title>The Tabby phenotype is caused by mutation in a mouse homologue of the EDA gene that reveals novel mouse and human exons and encodes a protein (ectodysplasin-A) with collagenous domains.</title>
        <authorList>
            <person name="Srivastava A.K."/>
            <person name="Pispa J."/>
            <person name="Hartung A.J."/>
            <person name="Du Y."/>
            <person name="Ezer S."/>
            <person name="Jenks T."/>
            <person name="Shimada T."/>
            <person name="Pekkanen M."/>
            <person name="Mikkola M.L."/>
            <person name="Ko M.S.H."/>
            <person name="Thesleff I."/>
            <person name="Kere J."/>
            <person name="Schlessinger D."/>
        </authorList>
    </citation>
    <scope>NUCLEOTIDE SEQUENCE [GENOMIC DNA / MRNA] (ISOFORMS TAA; TAB AND TAC)</scope>
    <source>
        <strain>129/Sv</strain>
    </source>
</reference>
<reference key="2">
    <citation type="journal article" date="1997" name="Hum. Mol. Genet.">
        <title>Cloning of Tabby, the murine homolog of the human EDA gene: evidence for a membrane-associated protein with a short collagenous domain.</title>
        <authorList>
            <person name="Ferguson B.M."/>
            <person name="Brockdorff N."/>
            <person name="Formstone E."/>
            <person name="Ngyuen T."/>
            <person name="Kronmiller J.E."/>
            <person name="Zonana J."/>
        </authorList>
    </citation>
    <scope>NUCLEOTIDE SEQUENCE [GENOMIC DNA / MRNA] (ISOFORM TAD)</scope>
</reference>
<reference key="3">
    <citation type="journal article" date="1999" name="Mech. Dev.">
        <title>Ectodysplasin, a protein required for epithelial morphogenesis, is a novel TNF homologue and promotes cell-matrix adhesion.</title>
        <authorList>
            <person name="Mikkola M.L."/>
            <person name="Pispa J."/>
            <person name="Pekkanen M."/>
            <person name="Paulin L."/>
            <person name="Nieminen P."/>
            <person name="Kere J."/>
            <person name="Thesleff I."/>
        </authorList>
    </citation>
    <scope>NUCLEOTIDE SEQUENCE [MRNA] (ISOFORMS TA-A2 AND TA-A3)</scope>
    <scope>FUNCTION</scope>
    <scope>SUBCELLULAR LOCATION</scope>
    <scope>TOPOLOGY</scope>
    <scope>GLYCOSYLATION</scope>
    <scope>SUBUNIT</scope>
    <source>
        <tissue>Embryo</tissue>
    </source>
</reference>
<reference key="4">
    <citation type="journal article" date="2004" name="Genome Res.">
        <title>The status, quality, and expansion of the NIH full-length cDNA project: the Mammalian Gene Collection (MGC).</title>
        <authorList>
            <consortium name="The MGC Project Team"/>
        </authorList>
    </citation>
    <scope>NUCLEOTIDE SEQUENCE [LARGE SCALE MRNA] (ISOFORM TA-A2)</scope>
    <source>
        <tissue>Brain</tissue>
    </source>
</reference>
<evidence type="ECO:0000250" key="1">
    <source>
        <dbReference type="UniProtKB" id="Q92838"/>
    </source>
</evidence>
<evidence type="ECO:0000255" key="2"/>
<evidence type="ECO:0000255" key="3">
    <source>
        <dbReference type="PROSITE-ProRule" id="PRU01387"/>
    </source>
</evidence>
<evidence type="ECO:0000256" key="4">
    <source>
        <dbReference type="SAM" id="MobiDB-lite"/>
    </source>
</evidence>
<evidence type="ECO:0000269" key="5">
    <source>
    </source>
</evidence>
<evidence type="ECO:0000303" key="6">
    <source>
    </source>
</evidence>
<evidence type="ECO:0000303" key="7">
    <source>
    </source>
</evidence>
<evidence type="ECO:0000303" key="8">
    <source>
    </source>
</evidence>
<evidence type="ECO:0000303" key="9">
    <source>
    </source>
</evidence>
<evidence type="ECO:0000305" key="10"/>
<accession>O54693</accession>
<accession>B7ZMT7</accession>
<accession>O35705</accession>
<accession>Q9QWJ8</accession>
<accession>Q9QZ01</accession>
<accession>Q9QZ02</accession>
<protein>
    <recommendedName>
        <fullName>Ectodysplasin-A</fullName>
    </recommendedName>
    <alternativeName>
        <fullName>EDA protein homolog</fullName>
    </alternativeName>
    <alternativeName>
        <fullName>Tabby protein</fullName>
    </alternativeName>
    <component>
        <recommendedName>
            <fullName>Ectodysplasin-A, membrane form</fullName>
        </recommendedName>
    </component>
    <component>
        <recommendedName>
            <fullName>Ectodysplasin-A, secreted form</fullName>
        </recommendedName>
    </component>
</protein>
<sequence>MGYPEVERREPLPAAAPRERGSQGCGCRGAPARAGEGNSCRLFLGFFGLSLALHLLTLCCYLELRSELRRERGTESRLGGPGAPGTSGTLSSPGSLDPVGPITRHLGQPSFQQQPLEPGEDPLPPDSQDRHQMALLNFFFPDEKAYSEEESRRVRRNKRSKSGEGADGPVKNKKKGKKAGPPGPNGPPGPPGPPGPQGPPGIPGIPGIPGTTVMGPPGPPGPPGPQGPPGLQGPSGAADKTGTRENQPAVVHLQGQGSAIQVKNDLSGGVLNDWSRITMNPKVFKLHPRSGELEVLVDGTYFIYSQVEVYYINFTDFASYEVVVDEKPFLQCTRSIETGKTNYNTCYTAGVCLLKARQKIAVKMVHADISINMSKHTTFFGAIRLGEAPAS</sequence>
<organism>
    <name type="scientific">Mus musculus</name>
    <name type="common">Mouse</name>
    <dbReference type="NCBI Taxonomy" id="10090"/>
    <lineage>
        <taxon>Eukaryota</taxon>
        <taxon>Metazoa</taxon>
        <taxon>Chordata</taxon>
        <taxon>Craniata</taxon>
        <taxon>Vertebrata</taxon>
        <taxon>Euteleostomi</taxon>
        <taxon>Mammalia</taxon>
        <taxon>Eutheria</taxon>
        <taxon>Euarchontoglires</taxon>
        <taxon>Glires</taxon>
        <taxon>Rodentia</taxon>
        <taxon>Myomorpha</taxon>
        <taxon>Muroidea</taxon>
        <taxon>Muridae</taxon>
        <taxon>Murinae</taxon>
        <taxon>Mus</taxon>
        <taxon>Mus</taxon>
    </lineage>
</organism>